<organism evidence="4">
    <name type="scientific">Melicytus chathamicus</name>
    <name type="common">Chatham Island mahoe</name>
    <name type="synonym">Hymenanthera latifolia var. chathamica</name>
    <dbReference type="NCBI Taxonomy" id="453349"/>
    <lineage>
        <taxon>Eukaryota</taxon>
        <taxon>Viridiplantae</taxon>
        <taxon>Streptophyta</taxon>
        <taxon>Embryophyta</taxon>
        <taxon>Tracheophyta</taxon>
        <taxon>Spermatophyta</taxon>
        <taxon>Magnoliopsida</taxon>
        <taxon>eudicotyledons</taxon>
        <taxon>Gunneridae</taxon>
        <taxon>Pentapetalae</taxon>
        <taxon>rosids</taxon>
        <taxon>fabids</taxon>
        <taxon>Malpighiales</taxon>
        <taxon>Violaceae</taxon>
        <taxon>Melicytus</taxon>
    </lineage>
</organism>
<dbReference type="SMR" id="C0HK40"/>
<dbReference type="GO" id="GO:0006952">
    <property type="term" value="P:defense response"/>
    <property type="evidence" value="ECO:0007669"/>
    <property type="project" value="UniProtKB-KW"/>
</dbReference>
<dbReference type="InterPro" id="IPR005535">
    <property type="entry name" value="Cyclotide"/>
</dbReference>
<dbReference type="InterPro" id="IPR012323">
    <property type="entry name" value="Cyclotide_bracelet_CS"/>
</dbReference>
<dbReference type="InterPro" id="IPR036146">
    <property type="entry name" value="Cyclotide_sf"/>
</dbReference>
<dbReference type="Pfam" id="PF03784">
    <property type="entry name" value="Cyclotide"/>
    <property type="match status" value="1"/>
</dbReference>
<dbReference type="PIRSF" id="PIRSF037891">
    <property type="entry name" value="Cycloviolacin"/>
    <property type="match status" value="1"/>
</dbReference>
<dbReference type="SUPFAM" id="SSF57038">
    <property type="entry name" value="Cyclotides"/>
    <property type="match status" value="1"/>
</dbReference>
<dbReference type="PROSITE" id="PS51052">
    <property type="entry name" value="CYCLOTIDE"/>
    <property type="match status" value="1"/>
</dbReference>
<dbReference type="PROSITE" id="PS60008">
    <property type="entry name" value="CYCLOTIDE_BRACELET"/>
    <property type="match status" value="1"/>
</dbReference>
<evidence type="ECO:0000250" key="1">
    <source>
        <dbReference type="UniProtKB" id="C0HK36"/>
    </source>
</evidence>
<evidence type="ECO:0000255" key="2">
    <source>
        <dbReference type="PROSITE-ProRule" id="PRU00395"/>
    </source>
</evidence>
<evidence type="ECO:0000269" key="3">
    <source>
    </source>
</evidence>
<evidence type="ECO:0000303" key="4">
    <source>
    </source>
</evidence>
<evidence type="ECO:0000305" key="5"/>
<evidence type="ECO:0000305" key="6">
    <source>
    </source>
</evidence>
<feature type="peptide" id="PRO_0000437519" description="Cyclotide mech-6" evidence="2 3">
    <location>
        <begin position="1"/>
        <end position="31"/>
    </location>
</feature>
<feature type="disulfide bond" evidence="2">
    <location>
        <begin position="5"/>
        <end position="21"/>
    </location>
</feature>
<feature type="disulfide bond" evidence="2">
    <location>
        <begin position="9"/>
        <end position="23"/>
    </location>
</feature>
<feature type="disulfide bond" evidence="2">
    <location>
        <begin position="14"/>
        <end position="28"/>
    </location>
</feature>
<feature type="cross-link" description="Cyclopeptide (Gly-Asn)" evidence="6">
    <location>
        <begin position="1"/>
        <end position="31"/>
    </location>
</feature>
<comment type="function">
    <text evidence="1 2">Probably participates in a plant defense mechanism (Potential). Binds to and induces leakage in phospholipd membranes, particularly ones containing 1-palmitoyl-2-oleophosphatidylethanolamine (POPE) (By similarity).</text>
</comment>
<comment type="domain">
    <text evidence="5">The presence of a 'disulfide through disulfide knot' structurally defines this protein as a knottin.</text>
</comment>
<comment type="PTM">
    <text evidence="2">This is a cyclic peptide.</text>
</comment>
<comment type="PTM">
    <text evidence="3">Contains 3 disulfide bonds.</text>
</comment>
<comment type="mass spectrometry"/>
<comment type="similarity">
    <text evidence="2">Belongs to the cyclotide family. Bracelet subfamily.</text>
</comment>
<comment type="caution">
    <text evidence="2">This peptide is cyclic. The start position was chosen by similarity to Oak1 (kalata B1) for which the DNA sequence is known.</text>
</comment>
<proteinExistence type="evidence at protein level"/>
<sequence>GVIPCGESCVFIPCISSVVGCTCKNKVCYRN</sequence>
<name>CYMC6_MELCT</name>
<keyword id="KW-0903">Direct protein sequencing</keyword>
<keyword id="KW-1015">Disulfide bond</keyword>
<keyword id="KW-0960">Knottin</keyword>
<keyword id="KW-0611">Plant defense</keyword>
<reference evidence="5" key="1">
    <citation type="journal article" date="2015" name="ACS Chem. Biol.">
        <title>Lysine-rich cyclotides: a new subclass of circular knotted proteins from Violaceae.</title>
        <authorList>
            <person name="Ravipati A.S."/>
            <person name="Henriques S.T."/>
            <person name="Poth A.G."/>
            <person name="Kaas Q."/>
            <person name="Wang C.K."/>
            <person name="Colgrave M.L."/>
            <person name="Craik D.J."/>
        </authorList>
    </citation>
    <scope>PROTEIN SEQUENCE</scope>
    <scope>MASS SPECTROMETRY</scope>
    <scope>IDENTIFICATION BY MASS SPECTROMETRY</scope>
    <scope>PRESENCE OF DISULFIDE BONDS</scope>
</reference>
<accession>C0HK40</accession>
<protein>
    <recommendedName>
        <fullName evidence="4">Cyclotide mech-6</fullName>
    </recommendedName>
</protein>